<proteinExistence type="inferred from homology"/>
<feature type="chain" id="PRO_0000255876" description="Pyridoxine/pyridoxamine 5'-phosphate oxidase">
    <location>
        <begin position="1"/>
        <end position="215"/>
    </location>
</feature>
<feature type="binding site" evidence="1">
    <location>
        <begin position="9"/>
        <end position="12"/>
    </location>
    <ligand>
        <name>substrate</name>
    </ligand>
</feature>
<feature type="binding site" evidence="1">
    <location>
        <begin position="64"/>
        <end position="69"/>
    </location>
    <ligand>
        <name>FMN</name>
        <dbReference type="ChEBI" id="CHEBI:58210"/>
    </ligand>
</feature>
<feature type="binding site" evidence="1">
    <location>
        <position position="69"/>
    </location>
    <ligand>
        <name>substrate</name>
    </ligand>
</feature>
<feature type="binding site" evidence="1">
    <location>
        <begin position="79"/>
        <end position="80"/>
    </location>
    <ligand>
        <name>FMN</name>
        <dbReference type="ChEBI" id="CHEBI:58210"/>
    </ligand>
</feature>
<feature type="binding site" evidence="1">
    <location>
        <position position="86"/>
    </location>
    <ligand>
        <name>FMN</name>
        <dbReference type="ChEBI" id="CHEBI:58210"/>
    </ligand>
</feature>
<feature type="binding site" evidence="1">
    <location>
        <position position="108"/>
    </location>
    <ligand>
        <name>FMN</name>
        <dbReference type="ChEBI" id="CHEBI:58210"/>
    </ligand>
</feature>
<feature type="binding site" evidence="1">
    <location>
        <position position="126"/>
    </location>
    <ligand>
        <name>substrate</name>
    </ligand>
</feature>
<feature type="binding site" evidence="1">
    <location>
        <position position="130"/>
    </location>
    <ligand>
        <name>substrate</name>
    </ligand>
</feature>
<feature type="binding site" evidence="1">
    <location>
        <position position="134"/>
    </location>
    <ligand>
        <name>substrate</name>
    </ligand>
</feature>
<feature type="binding site" evidence="1">
    <location>
        <begin position="143"/>
        <end position="144"/>
    </location>
    <ligand>
        <name>FMN</name>
        <dbReference type="ChEBI" id="CHEBI:58210"/>
    </ligand>
</feature>
<feature type="binding site" evidence="1">
    <location>
        <position position="188"/>
    </location>
    <ligand>
        <name>FMN</name>
        <dbReference type="ChEBI" id="CHEBI:58210"/>
    </ligand>
</feature>
<feature type="binding site" evidence="1">
    <location>
        <begin position="194"/>
        <end position="196"/>
    </location>
    <ligand>
        <name>substrate</name>
    </ligand>
</feature>
<feature type="binding site" evidence="1">
    <location>
        <position position="198"/>
    </location>
    <ligand>
        <name>FMN</name>
        <dbReference type="ChEBI" id="CHEBI:58210"/>
    </ligand>
</feature>
<keyword id="KW-0285">Flavoprotein</keyword>
<keyword id="KW-0288">FMN</keyword>
<keyword id="KW-0560">Oxidoreductase</keyword>
<keyword id="KW-0664">Pyridoxine biosynthesis</keyword>
<dbReference type="EC" id="1.4.3.5" evidence="1"/>
<dbReference type="EMBL" id="CP000094">
    <property type="protein sequence ID" value="ABA72972.1"/>
    <property type="molecule type" value="Genomic_DNA"/>
</dbReference>
<dbReference type="RefSeq" id="WP_011332787.1">
    <property type="nucleotide sequence ID" value="NC_007492.2"/>
</dbReference>
<dbReference type="SMR" id="Q3KGY4"/>
<dbReference type="KEGG" id="pfo:Pfl01_1229"/>
<dbReference type="eggNOG" id="COG0259">
    <property type="taxonomic scope" value="Bacteria"/>
</dbReference>
<dbReference type="HOGENOM" id="CLU_032263_2_2_6"/>
<dbReference type="UniPathway" id="UPA01068">
    <property type="reaction ID" value="UER00304"/>
</dbReference>
<dbReference type="UniPathway" id="UPA01068">
    <property type="reaction ID" value="UER00305"/>
</dbReference>
<dbReference type="Proteomes" id="UP000002704">
    <property type="component" value="Chromosome"/>
</dbReference>
<dbReference type="GO" id="GO:0010181">
    <property type="term" value="F:FMN binding"/>
    <property type="evidence" value="ECO:0007669"/>
    <property type="project" value="UniProtKB-UniRule"/>
</dbReference>
<dbReference type="GO" id="GO:0004733">
    <property type="term" value="F:pyridoxamine phosphate oxidase activity"/>
    <property type="evidence" value="ECO:0007669"/>
    <property type="project" value="UniProtKB-UniRule"/>
</dbReference>
<dbReference type="GO" id="GO:0008615">
    <property type="term" value="P:pyridoxine biosynthetic process"/>
    <property type="evidence" value="ECO:0007669"/>
    <property type="project" value="UniProtKB-KW"/>
</dbReference>
<dbReference type="FunFam" id="2.30.110.10:FF:000011">
    <property type="entry name" value="Chromosome 7, whole genome shotgun sequence"/>
    <property type="match status" value="1"/>
</dbReference>
<dbReference type="Gene3D" id="2.30.110.10">
    <property type="entry name" value="Electron Transport, Fmn-binding Protein, Chain A"/>
    <property type="match status" value="1"/>
</dbReference>
<dbReference type="HAMAP" id="MF_01629">
    <property type="entry name" value="PdxH"/>
    <property type="match status" value="1"/>
</dbReference>
<dbReference type="InterPro" id="IPR000659">
    <property type="entry name" value="Pyridox_Oxase"/>
</dbReference>
<dbReference type="InterPro" id="IPR019740">
    <property type="entry name" value="Pyridox_Oxase_CS"/>
</dbReference>
<dbReference type="InterPro" id="IPR011576">
    <property type="entry name" value="Pyridox_Oxase_N"/>
</dbReference>
<dbReference type="InterPro" id="IPR019576">
    <property type="entry name" value="Pyridoxamine_oxidase_dimer_C"/>
</dbReference>
<dbReference type="InterPro" id="IPR012349">
    <property type="entry name" value="Split_barrel_FMN-bd"/>
</dbReference>
<dbReference type="NCBIfam" id="TIGR00558">
    <property type="entry name" value="pdxH"/>
    <property type="match status" value="1"/>
</dbReference>
<dbReference type="NCBIfam" id="NF004231">
    <property type="entry name" value="PRK05679.1"/>
    <property type="match status" value="1"/>
</dbReference>
<dbReference type="PANTHER" id="PTHR10851:SF0">
    <property type="entry name" value="PYRIDOXINE-5'-PHOSPHATE OXIDASE"/>
    <property type="match status" value="1"/>
</dbReference>
<dbReference type="PANTHER" id="PTHR10851">
    <property type="entry name" value="PYRIDOXINE-5-PHOSPHATE OXIDASE"/>
    <property type="match status" value="1"/>
</dbReference>
<dbReference type="Pfam" id="PF10590">
    <property type="entry name" value="PNP_phzG_C"/>
    <property type="match status" value="1"/>
</dbReference>
<dbReference type="Pfam" id="PF01243">
    <property type="entry name" value="PNPOx_N"/>
    <property type="match status" value="1"/>
</dbReference>
<dbReference type="PIRSF" id="PIRSF000190">
    <property type="entry name" value="Pyd_amn-ph_oxd"/>
    <property type="match status" value="1"/>
</dbReference>
<dbReference type="SUPFAM" id="SSF50475">
    <property type="entry name" value="FMN-binding split barrel"/>
    <property type="match status" value="1"/>
</dbReference>
<dbReference type="PROSITE" id="PS01064">
    <property type="entry name" value="PYRIDOX_OXIDASE"/>
    <property type="match status" value="1"/>
</dbReference>
<gene>
    <name evidence="1" type="primary">pdxH</name>
    <name type="ordered locus">Pfl01_1229</name>
</gene>
<name>PDXH_PSEPF</name>
<reference key="1">
    <citation type="journal article" date="2009" name="Genome Biol.">
        <title>Genomic and genetic analyses of diversity and plant interactions of Pseudomonas fluorescens.</title>
        <authorList>
            <person name="Silby M.W."/>
            <person name="Cerdeno-Tarraga A.M."/>
            <person name="Vernikos G.S."/>
            <person name="Giddens S.R."/>
            <person name="Jackson R.W."/>
            <person name="Preston G.M."/>
            <person name="Zhang X.-X."/>
            <person name="Moon C.D."/>
            <person name="Gehrig S.M."/>
            <person name="Godfrey S.A.C."/>
            <person name="Knight C.G."/>
            <person name="Malone J.G."/>
            <person name="Robinson Z."/>
            <person name="Spiers A.J."/>
            <person name="Harris S."/>
            <person name="Challis G.L."/>
            <person name="Yaxley A.M."/>
            <person name="Harris D."/>
            <person name="Seeger K."/>
            <person name="Murphy L."/>
            <person name="Rutter S."/>
            <person name="Squares R."/>
            <person name="Quail M.A."/>
            <person name="Saunders E."/>
            <person name="Mavromatis K."/>
            <person name="Brettin T.S."/>
            <person name="Bentley S.D."/>
            <person name="Hothersall J."/>
            <person name="Stephens E."/>
            <person name="Thomas C.M."/>
            <person name="Parkhill J."/>
            <person name="Levy S.B."/>
            <person name="Rainey P.B."/>
            <person name="Thomson N.R."/>
        </authorList>
    </citation>
    <scope>NUCLEOTIDE SEQUENCE [LARGE SCALE GENOMIC DNA]</scope>
    <source>
        <strain>Pf0-1</strain>
    </source>
</reference>
<accession>Q3KGY4</accession>
<protein>
    <recommendedName>
        <fullName evidence="1">Pyridoxine/pyridoxamine 5'-phosphate oxidase</fullName>
        <ecNumber evidence="1">1.4.3.5</ecNumber>
    </recommendedName>
    <alternativeName>
        <fullName evidence="1">PNP/PMP oxidase</fullName>
        <shortName evidence="1">PNPOx</shortName>
    </alternativeName>
    <alternativeName>
        <fullName evidence="1">Pyridoxal 5'-phosphate synthase</fullName>
    </alternativeName>
</protein>
<evidence type="ECO:0000255" key="1">
    <source>
        <dbReference type="HAMAP-Rule" id="MF_01629"/>
    </source>
</evidence>
<comment type="function">
    <text evidence="1">Catalyzes the oxidation of either pyridoxine 5'-phosphate (PNP) or pyridoxamine 5'-phosphate (PMP) into pyridoxal 5'-phosphate (PLP).</text>
</comment>
<comment type="catalytic activity">
    <reaction evidence="1">
        <text>pyridoxamine 5'-phosphate + O2 + H2O = pyridoxal 5'-phosphate + H2O2 + NH4(+)</text>
        <dbReference type="Rhea" id="RHEA:15817"/>
        <dbReference type="ChEBI" id="CHEBI:15377"/>
        <dbReference type="ChEBI" id="CHEBI:15379"/>
        <dbReference type="ChEBI" id="CHEBI:16240"/>
        <dbReference type="ChEBI" id="CHEBI:28938"/>
        <dbReference type="ChEBI" id="CHEBI:58451"/>
        <dbReference type="ChEBI" id="CHEBI:597326"/>
        <dbReference type="EC" id="1.4.3.5"/>
    </reaction>
</comment>
<comment type="catalytic activity">
    <reaction evidence="1">
        <text>pyridoxine 5'-phosphate + O2 = pyridoxal 5'-phosphate + H2O2</text>
        <dbReference type="Rhea" id="RHEA:15149"/>
        <dbReference type="ChEBI" id="CHEBI:15379"/>
        <dbReference type="ChEBI" id="CHEBI:16240"/>
        <dbReference type="ChEBI" id="CHEBI:58589"/>
        <dbReference type="ChEBI" id="CHEBI:597326"/>
        <dbReference type="EC" id="1.4.3.5"/>
    </reaction>
</comment>
<comment type="cofactor">
    <cofactor evidence="1">
        <name>FMN</name>
        <dbReference type="ChEBI" id="CHEBI:58210"/>
    </cofactor>
    <text evidence="1">Binds 1 FMN per subunit.</text>
</comment>
<comment type="pathway">
    <text evidence="1">Cofactor metabolism; pyridoxal 5'-phosphate salvage; pyridoxal 5'-phosphate from pyridoxamine 5'-phosphate: step 1/1.</text>
</comment>
<comment type="pathway">
    <text evidence="1">Cofactor metabolism; pyridoxal 5'-phosphate salvage; pyridoxal 5'-phosphate from pyridoxine 5'-phosphate: step 1/1.</text>
</comment>
<comment type="subunit">
    <text evidence="1">Homodimer.</text>
</comment>
<comment type="similarity">
    <text evidence="1">Belongs to the pyridoxamine 5'-phosphate oxidase family.</text>
</comment>
<sequence length="215" mass="24590">MTQSLADMRRDYTRDGLTEAQAPAEPFALFHQWFAEAVKTEQAPVEANAMTLATVDADGRPHCRILLLKGLDEQGFTFFTNYESAKGQHLAANPFAAMTFFWPTLERQVRIEGRVVKVTPEESDAYYQVRPLGSRLGAWASPQSRVINGRGELEDLLKATEQRFTDTQPHCPEHWGGYRLLPERVEFWQGRASRLHDRLNYRVQGADWILERLAP</sequence>
<organism>
    <name type="scientific">Pseudomonas fluorescens (strain Pf0-1)</name>
    <dbReference type="NCBI Taxonomy" id="205922"/>
    <lineage>
        <taxon>Bacteria</taxon>
        <taxon>Pseudomonadati</taxon>
        <taxon>Pseudomonadota</taxon>
        <taxon>Gammaproteobacteria</taxon>
        <taxon>Pseudomonadales</taxon>
        <taxon>Pseudomonadaceae</taxon>
        <taxon>Pseudomonas</taxon>
    </lineage>
</organism>